<accession>Q83RG5</accession>
<organism>
    <name type="scientific">Shigella flexneri</name>
    <dbReference type="NCBI Taxonomy" id="623"/>
    <lineage>
        <taxon>Bacteria</taxon>
        <taxon>Pseudomonadati</taxon>
        <taxon>Pseudomonadota</taxon>
        <taxon>Gammaproteobacteria</taxon>
        <taxon>Enterobacterales</taxon>
        <taxon>Enterobacteriaceae</taxon>
        <taxon>Shigella</taxon>
    </lineage>
</organism>
<dbReference type="EC" id="6.3.1.5" evidence="1"/>
<dbReference type="EMBL" id="AE005674">
    <property type="protein sequence ID" value="AAN43078.1"/>
    <property type="molecule type" value="Genomic_DNA"/>
</dbReference>
<dbReference type="EMBL" id="AE014073">
    <property type="protein sequence ID" value="AAP16971.1"/>
    <property type="molecule type" value="Genomic_DNA"/>
</dbReference>
<dbReference type="RefSeq" id="NP_707371.1">
    <property type="nucleotide sequence ID" value="NC_004337.2"/>
</dbReference>
<dbReference type="RefSeq" id="WP_000175045.1">
    <property type="nucleotide sequence ID" value="NZ_WPGW01000081.1"/>
</dbReference>
<dbReference type="SMR" id="Q83RG5"/>
<dbReference type="STRING" id="198214.SF1486"/>
<dbReference type="PaxDb" id="198214-SF1486"/>
<dbReference type="GeneID" id="1024696"/>
<dbReference type="KEGG" id="sfl:SF1486"/>
<dbReference type="KEGG" id="sfx:S1603"/>
<dbReference type="PATRIC" id="fig|198214.7.peg.1754"/>
<dbReference type="HOGENOM" id="CLU_059327_3_0_6"/>
<dbReference type="UniPathway" id="UPA00253">
    <property type="reaction ID" value="UER00333"/>
</dbReference>
<dbReference type="Proteomes" id="UP000001006">
    <property type="component" value="Chromosome"/>
</dbReference>
<dbReference type="Proteomes" id="UP000002673">
    <property type="component" value="Chromosome"/>
</dbReference>
<dbReference type="GO" id="GO:0005737">
    <property type="term" value="C:cytoplasm"/>
    <property type="evidence" value="ECO:0007669"/>
    <property type="project" value="InterPro"/>
</dbReference>
<dbReference type="GO" id="GO:0005524">
    <property type="term" value="F:ATP binding"/>
    <property type="evidence" value="ECO:0007669"/>
    <property type="project" value="UniProtKB-UniRule"/>
</dbReference>
<dbReference type="GO" id="GO:0004359">
    <property type="term" value="F:glutaminase activity"/>
    <property type="evidence" value="ECO:0007669"/>
    <property type="project" value="InterPro"/>
</dbReference>
<dbReference type="GO" id="GO:0046872">
    <property type="term" value="F:metal ion binding"/>
    <property type="evidence" value="ECO:0007669"/>
    <property type="project" value="UniProtKB-KW"/>
</dbReference>
<dbReference type="GO" id="GO:0003952">
    <property type="term" value="F:NAD+ synthase (glutamine-hydrolyzing) activity"/>
    <property type="evidence" value="ECO:0007669"/>
    <property type="project" value="InterPro"/>
</dbReference>
<dbReference type="GO" id="GO:0008795">
    <property type="term" value="F:NAD+ synthase activity"/>
    <property type="evidence" value="ECO:0007669"/>
    <property type="project" value="UniProtKB-UniRule"/>
</dbReference>
<dbReference type="GO" id="GO:0009435">
    <property type="term" value="P:NAD biosynthetic process"/>
    <property type="evidence" value="ECO:0007669"/>
    <property type="project" value="UniProtKB-UniRule"/>
</dbReference>
<dbReference type="CDD" id="cd00553">
    <property type="entry name" value="NAD_synthase"/>
    <property type="match status" value="1"/>
</dbReference>
<dbReference type="FunFam" id="3.40.50.620:FF:000015">
    <property type="entry name" value="NH(3)-dependent NAD(+) synthetase"/>
    <property type="match status" value="1"/>
</dbReference>
<dbReference type="Gene3D" id="3.40.50.620">
    <property type="entry name" value="HUPs"/>
    <property type="match status" value="1"/>
</dbReference>
<dbReference type="HAMAP" id="MF_00193">
    <property type="entry name" value="NadE_ammonia_dep"/>
    <property type="match status" value="1"/>
</dbReference>
<dbReference type="InterPro" id="IPR022310">
    <property type="entry name" value="NAD/GMP_synthase"/>
</dbReference>
<dbReference type="InterPro" id="IPR003694">
    <property type="entry name" value="NAD_synthase"/>
</dbReference>
<dbReference type="InterPro" id="IPR022926">
    <property type="entry name" value="NH(3)-dep_NAD(+)_synth"/>
</dbReference>
<dbReference type="InterPro" id="IPR014729">
    <property type="entry name" value="Rossmann-like_a/b/a_fold"/>
</dbReference>
<dbReference type="NCBIfam" id="TIGR00552">
    <property type="entry name" value="nadE"/>
    <property type="match status" value="1"/>
</dbReference>
<dbReference type="NCBIfam" id="NF001979">
    <property type="entry name" value="PRK00768.1"/>
    <property type="match status" value="1"/>
</dbReference>
<dbReference type="PANTHER" id="PTHR23090">
    <property type="entry name" value="NH 3 /GLUTAMINE-DEPENDENT NAD + SYNTHETASE"/>
    <property type="match status" value="1"/>
</dbReference>
<dbReference type="PANTHER" id="PTHR23090:SF7">
    <property type="entry name" value="NH(3)-DEPENDENT NAD(+) SYNTHETASE"/>
    <property type="match status" value="1"/>
</dbReference>
<dbReference type="Pfam" id="PF02540">
    <property type="entry name" value="NAD_synthase"/>
    <property type="match status" value="1"/>
</dbReference>
<dbReference type="SUPFAM" id="SSF52402">
    <property type="entry name" value="Adenine nucleotide alpha hydrolases-like"/>
    <property type="match status" value="1"/>
</dbReference>
<gene>
    <name evidence="1" type="primary">nadE</name>
    <name type="ordered locus">SF1486</name>
    <name type="ordered locus">S1603</name>
</gene>
<protein>
    <recommendedName>
        <fullName evidence="1">NH(3)-dependent NAD(+) synthetase</fullName>
        <ecNumber evidence="1">6.3.1.5</ecNumber>
    </recommendedName>
</protein>
<feature type="chain" id="PRO_0000152193" description="NH(3)-dependent NAD(+) synthetase">
    <location>
        <begin position="1"/>
        <end position="275"/>
    </location>
</feature>
<feature type="binding site" evidence="1">
    <location>
        <begin position="46"/>
        <end position="53"/>
    </location>
    <ligand>
        <name>ATP</name>
        <dbReference type="ChEBI" id="CHEBI:30616"/>
    </ligand>
</feature>
<feature type="binding site" evidence="1">
    <location>
        <position position="52"/>
    </location>
    <ligand>
        <name>Mg(2+)</name>
        <dbReference type="ChEBI" id="CHEBI:18420"/>
    </ligand>
</feature>
<feature type="binding site" evidence="1">
    <location>
        <position position="140"/>
    </location>
    <ligand>
        <name>deamido-NAD(+)</name>
        <dbReference type="ChEBI" id="CHEBI:58437"/>
    </ligand>
</feature>
<feature type="binding site" evidence="1">
    <location>
        <position position="160"/>
    </location>
    <ligand>
        <name>ATP</name>
        <dbReference type="ChEBI" id="CHEBI:30616"/>
    </ligand>
</feature>
<feature type="binding site" evidence="1">
    <location>
        <position position="165"/>
    </location>
    <ligand>
        <name>Mg(2+)</name>
        <dbReference type="ChEBI" id="CHEBI:18420"/>
    </ligand>
</feature>
<feature type="binding site" evidence="1">
    <location>
        <position position="173"/>
    </location>
    <ligand>
        <name>deamido-NAD(+)</name>
        <dbReference type="ChEBI" id="CHEBI:58437"/>
    </ligand>
</feature>
<feature type="binding site" evidence="1">
    <location>
        <position position="180"/>
    </location>
    <ligand>
        <name>deamido-NAD(+)</name>
        <dbReference type="ChEBI" id="CHEBI:58437"/>
    </ligand>
</feature>
<feature type="binding site" evidence="1">
    <location>
        <position position="189"/>
    </location>
    <ligand>
        <name>ATP</name>
        <dbReference type="ChEBI" id="CHEBI:30616"/>
    </ligand>
</feature>
<feature type="binding site" evidence="1">
    <location>
        <position position="211"/>
    </location>
    <ligand>
        <name>ATP</name>
        <dbReference type="ChEBI" id="CHEBI:30616"/>
    </ligand>
</feature>
<feature type="binding site" evidence="1">
    <location>
        <begin position="260"/>
        <end position="261"/>
    </location>
    <ligand>
        <name>deamido-NAD(+)</name>
        <dbReference type="ChEBI" id="CHEBI:58437"/>
    </ligand>
</feature>
<sequence>MTLQQQIIKALGAKPQINAEEEIRRSVDFLKSYLQTYPFIKSLVLGISGGQDSTLAGKLCQMAINELRQETRNESLQFIAVRLPYGVQADEQDCQDAIAFIQPDRVLTVNIKGAVLASEQALREAGIELSDFVRGNEKARERMKAQYSIAGMTSGVVVGTDHAAEAITGFFTKYGDGGTDINPLYRLNKRQGKQLLTALGCPEHLYKKAPTADLEDDRPSLPDEVALGVTYDNIDDYLEGKNLPEQVARTIENWYLKTEHKRRPPINVFDDFWKK</sequence>
<reference key="1">
    <citation type="journal article" date="2002" name="Nucleic Acids Res.">
        <title>Genome sequence of Shigella flexneri 2a: insights into pathogenicity through comparison with genomes of Escherichia coli K12 and O157.</title>
        <authorList>
            <person name="Jin Q."/>
            <person name="Yuan Z."/>
            <person name="Xu J."/>
            <person name="Wang Y."/>
            <person name="Shen Y."/>
            <person name="Lu W."/>
            <person name="Wang J."/>
            <person name="Liu H."/>
            <person name="Yang J."/>
            <person name="Yang F."/>
            <person name="Zhang X."/>
            <person name="Zhang J."/>
            <person name="Yang G."/>
            <person name="Wu H."/>
            <person name="Qu D."/>
            <person name="Dong J."/>
            <person name="Sun L."/>
            <person name="Xue Y."/>
            <person name="Zhao A."/>
            <person name="Gao Y."/>
            <person name="Zhu J."/>
            <person name="Kan B."/>
            <person name="Ding K."/>
            <person name="Chen S."/>
            <person name="Cheng H."/>
            <person name="Yao Z."/>
            <person name="He B."/>
            <person name="Chen R."/>
            <person name="Ma D."/>
            <person name="Qiang B."/>
            <person name="Wen Y."/>
            <person name="Hou Y."/>
            <person name="Yu J."/>
        </authorList>
    </citation>
    <scope>NUCLEOTIDE SEQUENCE [LARGE SCALE GENOMIC DNA]</scope>
    <source>
        <strain>301 / Serotype 2a</strain>
    </source>
</reference>
<reference key="2">
    <citation type="journal article" date="2003" name="Infect. Immun.">
        <title>Complete genome sequence and comparative genomics of Shigella flexneri serotype 2a strain 2457T.</title>
        <authorList>
            <person name="Wei J."/>
            <person name="Goldberg M.B."/>
            <person name="Burland V."/>
            <person name="Venkatesan M.M."/>
            <person name="Deng W."/>
            <person name="Fournier G."/>
            <person name="Mayhew G.F."/>
            <person name="Plunkett G. III"/>
            <person name="Rose D.J."/>
            <person name="Darling A."/>
            <person name="Mau B."/>
            <person name="Perna N.T."/>
            <person name="Payne S.M."/>
            <person name="Runyen-Janecky L.J."/>
            <person name="Zhou S."/>
            <person name="Schwartz D.C."/>
            <person name="Blattner F.R."/>
        </authorList>
    </citation>
    <scope>NUCLEOTIDE SEQUENCE [LARGE SCALE GENOMIC DNA]</scope>
    <source>
        <strain>ATCC 700930 / 2457T / Serotype 2a</strain>
    </source>
</reference>
<comment type="function">
    <text evidence="1">Catalyzes the ATP-dependent amidation of deamido-NAD to form NAD. Uses ammonia as a nitrogen source.</text>
</comment>
<comment type="catalytic activity">
    <reaction evidence="1">
        <text>deamido-NAD(+) + NH4(+) + ATP = AMP + diphosphate + NAD(+) + H(+)</text>
        <dbReference type="Rhea" id="RHEA:21188"/>
        <dbReference type="ChEBI" id="CHEBI:15378"/>
        <dbReference type="ChEBI" id="CHEBI:28938"/>
        <dbReference type="ChEBI" id="CHEBI:30616"/>
        <dbReference type="ChEBI" id="CHEBI:33019"/>
        <dbReference type="ChEBI" id="CHEBI:57540"/>
        <dbReference type="ChEBI" id="CHEBI:58437"/>
        <dbReference type="ChEBI" id="CHEBI:456215"/>
        <dbReference type="EC" id="6.3.1.5"/>
    </reaction>
</comment>
<comment type="pathway">
    <text evidence="1">Cofactor biosynthesis; NAD(+) biosynthesis; NAD(+) from deamido-NAD(+) (ammonia route): step 1/1.</text>
</comment>
<comment type="subunit">
    <text evidence="1">Homodimer.</text>
</comment>
<comment type="similarity">
    <text evidence="1">Belongs to the NAD synthetase family.</text>
</comment>
<keyword id="KW-0067">ATP-binding</keyword>
<keyword id="KW-0436">Ligase</keyword>
<keyword id="KW-0460">Magnesium</keyword>
<keyword id="KW-0479">Metal-binding</keyword>
<keyword id="KW-0520">NAD</keyword>
<keyword id="KW-0547">Nucleotide-binding</keyword>
<keyword id="KW-1185">Reference proteome</keyword>
<proteinExistence type="inferred from homology"/>
<name>NADE_SHIFL</name>
<evidence type="ECO:0000255" key="1">
    <source>
        <dbReference type="HAMAP-Rule" id="MF_00193"/>
    </source>
</evidence>